<gene>
    <name evidence="1" type="primary">rpsQ</name>
    <name type="ordered locus">ELI_08145</name>
</gene>
<proteinExistence type="inferred from homology"/>
<evidence type="ECO:0000255" key="1">
    <source>
        <dbReference type="HAMAP-Rule" id="MF_01345"/>
    </source>
</evidence>
<evidence type="ECO:0000305" key="2"/>
<organism>
    <name type="scientific">Erythrobacter litoralis (strain HTCC2594)</name>
    <dbReference type="NCBI Taxonomy" id="314225"/>
    <lineage>
        <taxon>Bacteria</taxon>
        <taxon>Pseudomonadati</taxon>
        <taxon>Pseudomonadota</taxon>
        <taxon>Alphaproteobacteria</taxon>
        <taxon>Sphingomonadales</taxon>
        <taxon>Erythrobacteraceae</taxon>
        <taxon>Erythrobacter/Porphyrobacter group</taxon>
        <taxon>Erythrobacter</taxon>
    </lineage>
</organism>
<comment type="function">
    <text evidence="1">One of the primary rRNA binding proteins, it binds specifically to the 5'-end of 16S ribosomal RNA.</text>
</comment>
<comment type="subunit">
    <text evidence="1">Part of the 30S ribosomal subunit.</text>
</comment>
<comment type="similarity">
    <text evidence="1">Belongs to the universal ribosomal protein uS17 family.</text>
</comment>
<accession>Q2N9C0</accession>
<protein>
    <recommendedName>
        <fullName evidence="1">Small ribosomal subunit protein uS17</fullName>
    </recommendedName>
    <alternativeName>
        <fullName evidence="2">30S ribosomal protein S17</fullName>
    </alternativeName>
</protein>
<sequence length="100" mass="11099">MPKRILIGTVTSDKTDKTVTVLVERKVKHPLYGKIIRRSKKYHAHDEKNEYTLGDVVRIEETKPISKTKTWAVKDRVVAGGTQAIEADLDVAEATPGGAE</sequence>
<feature type="chain" id="PRO_1000054951" description="Small ribosomal subunit protein uS17">
    <location>
        <begin position="1"/>
        <end position="100"/>
    </location>
</feature>
<dbReference type="EMBL" id="CP000157">
    <property type="protein sequence ID" value="ABC63721.1"/>
    <property type="molecule type" value="Genomic_DNA"/>
</dbReference>
<dbReference type="RefSeq" id="WP_011414553.1">
    <property type="nucleotide sequence ID" value="NC_007722.1"/>
</dbReference>
<dbReference type="SMR" id="Q2N9C0"/>
<dbReference type="STRING" id="314225.ELI_08145"/>
<dbReference type="KEGG" id="eli:ELI_08145"/>
<dbReference type="eggNOG" id="COG0186">
    <property type="taxonomic scope" value="Bacteria"/>
</dbReference>
<dbReference type="HOGENOM" id="CLU_073626_1_1_5"/>
<dbReference type="OrthoDB" id="9811714at2"/>
<dbReference type="Proteomes" id="UP000008808">
    <property type="component" value="Chromosome"/>
</dbReference>
<dbReference type="GO" id="GO:0022627">
    <property type="term" value="C:cytosolic small ribosomal subunit"/>
    <property type="evidence" value="ECO:0007669"/>
    <property type="project" value="TreeGrafter"/>
</dbReference>
<dbReference type="GO" id="GO:0019843">
    <property type="term" value="F:rRNA binding"/>
    <property type="evidence" value="ECO:0007669"/>
    <property type="project" value="UniProtKB-UniRule"/>
</dbReference>
<dbReference type="GO" id="GO:0003735">
    <property type="term" value="F:structural constituent of ribosome"/>
    <property type="evidence" value="ECO:0007669"/>
    <property type="project" value="InterPro"/>
</dbReference>
<dbReference type="GO" id="GO:0006412">
    <property type="term" value="P:translation"/>
    <property type="evidence" value="ECO:0007669"/>
    <property type="project" value="UniProtKB-UniRule"/>
</dbReference>
<dbReference type="CDD" id="cd00364">
    <property type="entry name" value="Ribosomal_uS17"/>
    <property type="match status" value="1"/>
</dbReference>
<dbReference type="Gene3D" id="2.40.50.140">
    <property type="entry name" value="Nucleic acid-binding proteins"/>
    <property type="match status" value="1"/>
</dbReference>
<dbReference type="HAMAP" id="MF_01345_B">
    <property type="entry name" value="Ribosomal_uS17_B"/>
    <property type="match status" value="1"/>
</dbReference>
<dbReference type="InterPro" id="IPR012340">
    <property type="entry name" value="NA-bd_OB-fold"/>
</dbReference>
<dbReference type="InterPro" id="IPR000266">
    <property type="entry name" value="Ribosomal_uS17"/>
</dbReference>
<dbReference type="InterPro" id="IPR019984">
    <property type="entry name" value="Ribosomal_uS17_bact/chlr"/>
</dbReference>
<dbReference type="InterPro" id="IPR019979">
    <property type="entry name" value="Ribosomal_uS17_CS"/>
</dbReference>
<dbReference type="NCBIfam" id="NF004123">
    <property type="entry name" value="PRK05610.1"/>
    <property type="match status" value="1"/>
</dbReference>
<dbReference type="NCBIfam" id="TIGR03635">
    <property type="entry name" value="uS17_bact"/>
    <property type="match status" value="1"/>
</dbReference>
<dbReference type="PANTHER" id="PTHR10744">
    <property type="entry name" value="40S RIBOSOMAL PROTEIN S11 FAMILY MEMBER"/>
    <property type="match status" value="1"/>
</dbReference>
<dbReference type="PANTHER" id="PTHR10744:SF1">
    <property type="entry name" value="SMALL RIBOSOMAL SUBUNIT PROTEIN US17M"/>
    <property type="match status" value="1"/>
</dbReference>
<dbReference type="Pfam" id="PF00366">
    <property type="entry name" value="Ribosomal_S17"/>
    <property type="match status" value="1"/>
</dbReference>
<dbReference type="PRINTS" id="PR00973">
    <property type="entry name" value="RIBOSOMALS17"/>
</dbReference>
<dbReference type="SUPFAM" id="SSF50249">
    <property type="entry name" value="Nucleic acid-binding proteins"/>
    <property type="match status" value="1"/>
</dbReference>
<dbReference type="PROSITE" id="PS00056">
    <property type="entry name" value="RIBOSOMAL_S17"/>
    <property type="match status" value="1"/>
</dbReference>
<keyword id="KW-1185">Reference proteome</keyword>
<keyword id="KW-0687">Ribonucleoprotein</keyword>
<keyword id="KW-0689">Ribosomal protein</keyword>
<keyword id="KW-0694">RNA-binding</keyword>
<keyword id="KW-0699">rRNA-binding</keyword>
<name>RS17_ERYLH</name>
<reference key="1">
    <citation type="journal article" date="2009" name="J. Bacteriol.">
        <title>Complete genome sequence of Erythrobacter litoralis HTCC2594.</title>
        <authorList>
            <person name="Oh H.M."/>
            <person name="Giovannoni S.J."/>
            <person name="Ferriera S."/>
            <person name="Johnson J."/>
            <person name="Cho J.C."/>
        </authorList>
    </citation>
    <scope>NUCLEOTIDE SEQUENCE [LARGE SCALE GENOMIC DNA]</scope>
    <source>
        <strain>HTCC2594</strain>
    </source>
</reference>